<keyword id="KW-0269">Exonuclease</keyword>
<keyword id="KW-0378">Hydrolase</keyword>
<keyword id="KW-0460">Magnesium</keyword>
<keyword id="KW-0479">Metal-binding</keyword>
<keyword id="KW-0540">Nuclease</keyword>
<keyword id="KW-0819">tRNA processing</keyword>
<proteinExistence type="inferred from homology"/>
<accession>A5UGD7</accession>
<sequence>MSDSQEIPYHNQLKNRFRGYFPVIIDVETAGFDAKKDALLELAAITLKMDENGYLHPDQKCHFHIEPFEGANINPESLKFNGIDIHNPLRGAVSELNAITGLFQMVRRGQKDADCQRSIIVAHNAAFDQSFVMAAAERTGVKRNPFHPFGMFDTASLAGLMFGQTVLVKACQAAKIPFDGKQAHSALYDTERTAKLFCYMVNHLKDLGGFPHIASELEQEKTTEKETAL</sequence>
<protein>
    <recommendedName>
        <fullName evidence="1">Ribonuclease T</fullName>
        <ecNumber evidence="1">3.1.13.-</ecNumber>
    </recommendedName>
    <alternativeName>
        <fullName evidence="1">Exoribonuclease T</fullName>
        <shortName evidence="1">RNase T</shortName>
    </alternativeName>
</protein>
<gene>
    <name evidence="1" type="primary">rnt</name>
    <name type="ordered locus">CGSHiGG_04420</name>
</gene>
<evidence type="ECO:0000255" key="1">
    <source>
        <dbReference type="HAMAP-Rule" id="MF_00157"/>
    </source>
</evidence>
<comment type="function">
    <text evidence="1">Trims short 3' overhangs of a variety of RNA species, leaving a one or two nucleotide 3' overhang. Responsible for the end-turnover of tRNA: specifically removes the terminal AMP residue from uncharged tRNA (tRNA-C-C-A). Also appears to be involved in tRNA biosynthesis.</text>
</comment>
<comment type="cofactor">
    <cofactor evidence="1">
        <name>Mg(2+)</name>
        <dbReference type="ChEBI" id="CHEBI:18420"/>
    </cofactor>
    <text evidence="1">Binds two Mg(2+) per subunit. The active form of the enzyme binds two Mg(2+) ions in its active site. The first Mg(2+) forms only one salt bridge with the protein.</text>
</comment>
<comment type="subunit">
    <text evidence="1">Homodimer.</text>
</comment>
<comment type="similarity">
    <text evidence="1">Belongs to the RNase T family.</text>
</comment>
<name>RNT_HAEIG</name>
<dbReference type="EC" id="3.1.13.-" evidence="1"/>
<dbReference type="EMBL" id="CP000672">
    <property type="protein sequence ID" value="ABQ99842.1"/>
    <property type="molecule type" value="Genomic_DNA"/>
</dbReference>
<dbReference type="SMR" id="A5UGD7"/>
<dbReference type="KEGG" id="hiq:CGSHiGG_04420"/>
<dbReference type="HOGENOM" id="CLU_082724_0_0_6"/>
<dbReference type="Proteomes" id="UP000001990">
    <property type="component" value="Chromosome"/>
</dbReference>
<dbReference type="GO" id="GO:0005829">
    <property type="term" value="C:cytosol"/>
    <property type="evidence" value="ECO:0007669"/>
    <property type="project" value="TreeGrafter"/>
</dbReference>
<dbReference type="GO" id="GO:0008408">
    <property type="term" value="F:3'-5' exonuclease activity"/>
    <property type="evidence" value="ECO:0007669"/>
    <property type="project" value="TreeGrafter"/>
</dbReference>
<dbReference type="GO" id="GO:0000287">
    <property type="term" value="F:magnesium ion binding"/>
    <property type="evidence" value="ECO:0007669"/>
    <property type="project" value="UniProtKB-UniRule"/>
</dbReference>
<dbReference type="GO" id="GO:0003676">
    <property type="term" value="F:nucleic acid binding"/>
    <property type="evidence" value="ECO:0007669"/>
    <property type="project" value="InterPro"/>
</dbReference>
<dbReference type="GO" id="GO:0016896">
    <property type="term" value="F:RNA exonuclease activity, producing 5'-phosphomonoesters"/>
    <property type="evidence" value="ECO:0007669"/>
    <property type="project" value="UniProtKB-UniRule"/>
</dbReference>
<dbReference type="GO" id="GO:0045004">
    <property type="term" value="P:DNA replication proofreading"/>
    <property type="evidence" value="ECO:0007669"/>
    <property type="project" value="TreeGrafter"/>
</dbReference>
<dbReference type="GO" id="GO:0008033">
    <property type="term" value="P:tRNA processing"/>
    <property type="evidence" value="ECO:0007669"/>
    <property type="project" value="UniProtKB-KW"/>
</dbReference>
<dbReference type="CDD" id="cd06134">
    <property type="entry name" value="RNaseT"/>
    <property type="match status" value="1"/>
</dbReference>
<dbReference type="FunFam" id="3.30.420.10:FF:000009">
    <property type="entry name" value="Ribonuclease T"/>
    <property type="match status" value="1"/>
</dbReference>
<dbReference type="Gene3D" id="3.30.420.10">
    <property type="entry name" value="Ribonuclease H-like superfamily/Ribonuclease H"/>
    <property type="match status" value="1"/>
</dbReference>
<dbReference type="HAMAP" id="MF_00157">
    <property type="entry name" value="RNase_T"/>
    <property type="match status" value="1"/>
</dbReference>
<dbReference type="InterPro" id="IPR013520">
    <property type="entry name" value="Exonuclease_RNaseT/DNA_pol3"/>
</dbReference>
<dbReference type="InterPro" id="IPR005987">
    <property type="entry name" value="RNase_T"/>
</dbReference>
<dbReference type="InterPro" id="IPR012337">
    <property type="entry name" value="RNaseH-like_sf"/>
</dbReference>
<dbReference type="InterPro" id="IPR036397">
    <property type="entry name" value="RNaseH_sf"/>
</dbReference>
<dbReference type="NCBIfam" id="TIGR01298">
    <property type="entry name" value="RNaseT"/>
    <property type="match status" value="1"/>
</dbReference>
<dbReference type="PANTHER" id="PTHR30231">
    <property type="entry name" value="DNA POLYMERASE III SUBUNIT EPSILON"/>
    <property type="match status" value="1"/>
</dbReference>
<dbReference type="PANTHER" id="PTHR30231:SF2">
    <property type="entry name" value="RIBONUCLEASE T"/>
    <property type="match status" value="1"/>
</dbReference>
<dbReference type="Pfam" id="PF00929">
    <property type="entry name" value="RNase_T"/>
    <property type="match status" value="1"/>
</dbReference>
<dbReference type="SMART" id="SM00479">
    <property type="entry name" value="EXOIII"/>
    <property type="match status" value="1"/>
</dbReference>
<dbReference type="SUPFAM" id="SSF53098">
    <property type="entry name" value="Ribonuclease H-like"/>
    <property type="match status" value="1"/>
</dbReference>
<reference key="1">
    <citation type="journal article" date="2007" name="Genome Biol.">
        <title>Characterization and modeling of the Haemophilus influenzae core and supragenomes based on the complete genomic sequences of Rd and 12 clinical nontypeable strains.</title>
        <authorList>
            <person name="Hogg J.S."/>
            <person name="Hu F.Z."/>
            <person name="Janto B."/>
            <person name="Boissy R."/>
            <person name="Hayes J."/>
            <person name="Keefe R."/>
            <person name="Post J.C."/>
            <person name="Ehrlich G.D."/>
        </authorList>
    </citation>
    <scope>NUCLEOTIDE SEQUENCE [LARGE SCALE GENOMIC DNA]</scope>
    <source>
        <strain>PittGG</strain>
    </source>
</reference>
<organism>
    <name type="scientific">Haemophilus influenzae (strain PittGG)</name>
    <dbReference type="NCBI Taxonomy" id="374931"/>
    <lineage>
        <taxon>Bacteria</taxon>
        <taxon>Pseudomonadati</taxon>
        <taxon>Pseudomonadota</taxon>
        <taxon>Gammaproteobacteria</taxon>
        <taxon>Pasteurellales</taxon>
        <taxon>Pasteurellaceae</taxon>
        <taxon>Haemophilus</taxon>
    </lineage>
</organism>
<feature type="chain" id="PRO_1000011397" description="Ribonuclease T">
    <location>
        <begin position="1"/>
        <end position="229"/>
    </location>
</feature>
<feature type="domain" description="Exonuclease" evidence="1">
    <location>
        <begin position="23"/>
        <end position="197"/>
    </location>
</feature>
<feature type="active site" description="Proton donor/acceptor" evidence="1">
    <location>
        <position position="184"/>
    </location>
</feature>
<feature type="binding site" evidence="1">
    <location>
        <position position="26"/>
    </location>
    <ligand>
        <name>Mg(2+)</name>
        <dbReference type="ChEBI" id="CHEBI:18420"/>
        <label>1</label>
        <note>catalytic</note>
    </ligand>
</feature>
<feature type="binding site" evidence="1">
    <location>
        <position position="26"/>
    </location>
    <ligand>
        <name>Mg(2+)</name>
        <dbReference type="ChEBI" id="CHEBI:18420"/>
        <label>2</label>
        <note>catalytic</note>
    </ligand>
</feature>
<feature type="binding site" evidence="1">
    <location>
        <position position="28"/>
    </location>
    <ligand>
        <name>Mg(2+)</name>
        <dbReference type="ChEBI" id="CHEBI:18420"/>
        <label>2</label>
        <note>catalytic</note>
    </ligand>
</feature>
<feature type="binding site" evidence="1">
    <location>
        <position position="184"/>
    </location>
    <ligand>
        <name>Mg(2+)</name>
        <dbReference type="ChEBI" id="CHEBI:18420"/>
        <label>2</label>
        <note>catalytic</note>
    </ligand>
</feature>
<feature type="binding site" evidence="1">
    <location>
        <position position="189"/>
    </location>
    <ligand>
        <name>Mg(2+)</name>
        <dbReference type="ChEBI" id="CHEBI:18420"/>
        <label>2</label>
        <note>catalytic</note>
    </ligand>
</feature>
<feature type="site" description="Important for substrate binding and specificity" evidence="1">
    <location>
        <position position="32"/>
    </location>
</feature>
<feature type="site" description="Important for substrate binding and specificity" evidence="1">
    <location>
        <position position="80"/>
    </location>
</feature>
<feature type="site" description="Important for substrate binding and specificity" evidence="1">
    <location>
        <position position="127"/>
    </location>
</feature>
<feature type="site" description="Important for substrate binding and specificity" evidence="1">
    <location>
        <position position="149"/>
    </location>
</feature>